<name>CRYAA_TRIIN</name>
<dbReference type="SMR" id="P02500"/>
<dbReference type="GlyCosmos" id="P02500">
    <property type="glycosylation" value="1 site, No reported glycans"/>
</dbReference>
<dbReference type="GO" id="GO:0005737">
    <property type="term" value="C:cytoplasm"/>
    <property type="evidence" value="ECO:0000250"/>
    <property type="project" value="UniProtKB"/>
</dbReference>
<dbReference type="GO" id="GO:0005634">
    <property type="term" value="C:nucleus"/>
    <property type="evidence" value="ECO:0000250"/>
    <property type="project" value="UniProtKB"/>
</dbReference>
<dbReference type="GO" id="GO:0046872">
    <property type="term" value="F:metal ion binding"/>
    <property type="evidence" value="ECO:0007669"/>
    <property type="project" value="UniProtKB-KW"/>
</dbReference>
<dbReference type="GO" id="GO:0005212">
    <property type="term" value="F:structural constituent of eye lens"/>
    <property type="evidence" value="ECO:0007669"/>
    <property type="project" value="UniProtKB-KW"/>
</dbReference>
<dbReference type="GO" id="GO:0051082">
    <property type="term" value="F:unfolded protein binding"/>
    <property type="evidence" value="ECO:0007669"/>
    <property type="project" value="TreeGrafter"/>
</dbReference>
<dbReference type="GO" id="GO:0002088">
    <property type="term" value="P:lens development in camera-type eye"/>
    <property type="evidence" value="ECO:0007669"/>
    <property type="project" value="TreeGrafter"/>
</dbReference>
<dbReference type="GO" id="GO:0043066">
    <property type="term" value="P:negative regulation of apoptotic process"/>
    <property type="evidence" value="ECO:0007669"/>
    <property type="project" value="TreeGrafter"/>
</dbReference>
<dbReference type="GO" id="GO:0042026">
    <property type="term" value="P:protein refolding"/>
    <property type="evidence" value="ECO:0007669"/>
    <property type="project" value="TreeGrafter"/>
</dbReference>
<dbReference type="GO" id="GO:0009408">
    <property type="term" value="P:response to heat"/>
    <property type="evidence" value="ECO:0007669"/>
    <property type="project" value="TreeGrafter"/>
</dbReference>
<dbReference type="FunFam" id="2.60.40.790:FF:000008">
    <property type="entry name" value="Alpha-crystallin A chain"/>
    <property type="match status" value="1"/>
</dbReference>
<dbReference type="Gene3D" id="2.60.40.790">
    <property type="match status" value="1"/>
</dbReference>
<dbReference type="InterPro" id="IPR002068">
    <property type="entry name" value="A-crystallin/Hsp20_dom"/>
</dbReference>
<dbReference type="InterPro" id="IPR001436">
    <property type="entry name" value="Alpha-crystallin/sHSP_animal"/>
</dbReference>
<dbReference type="InterPro" id="IPR003090">
    <property type="entry name" value="Alpha-crystallin_N"/>
</dbReference>
<dbReference type="InterPro" id="IPR008978">
    <property type="entry name" value="HSP20-like_chaperone"/>
</dbReference>
<dbReference type="PANTHER" id="PTHR45640:SF14">
    <property type="entry name" value="ALPHA-CRYSTALLIN A CHAIN"/>
    <property type="match status" value="1"/>
</dbReference>
<dbReference type="PANTHER" id="PTHR45640">
    <property type="entry name" value="HEAT SHOCK PROTEIN HSP-12.2-RELATED"/>
    <property type="match status" value="1"/>
</dbReference>
<dbReference type="Pfam" id="PF00525">
    <property type="entry name" value="Crystallin"/>
    <property type="match status" value="1"/>
</dbReference>
<dbReference type="Pfam" id="PF00011">
    <property type="entry name" value="HSP20"/>
    <property type="match status" value="1"/>
</dbReference>
<dbReference type="PRINTS" id="PR00299">
    <property type="entry name" value="ACRYSTALLIN"/>
</dbReference>
<dbReference type="SUPFAM" id="SSF49764">
    <property type="entry name" value="HSP20-like chaperones"/>
    <property type="match status" value="1"/>
</dbReference>
<dbReference type="PROSITE" id="PS01031">
    <property type="entry name" value="SHSP"/>
    <property type="match status" value="1"/>
</dbReference>
<proteinExistence type="evidence at protein level"/>
<keyword id="KW-0007">Acetylation</keyword>
<keyword id="KW-0143">Chaperone</keyword>
<keyword id="KW-0963">Cytoplasm</keyword>
<keyword id="KW-0903">Direct protein sequencing</keyword>
<keyword id="KW-1015">Disulfide bond</keyword>
<keyword id="KW-0273">Eye lens protein</keyword>
<keyword id="KW-0325">Glycoprotein</keyword>
<keyword id="KW-0479">Metal-binding</keyword>
<keyword id="KW-0488">Methylation</keyword>
<keyword id="KW-0539">Nucleus</keyword>
<keyword id="KW-0597">Phosphoprotein</keyword>
<keyword id="KW-0862">Zinc</keyword>
<gene>
    <name type="primary">CRYAA</name>
</gene>
<evidence type="ECO:0000250" key="1"/>
<evidence type="ECO:0000250" key="2">
    <source>
        <dbReference type="UniProtKB" id="P02470"/>
    </source>
</evidence>
<evidence type="ECO:0000250" key="3">
    <source>
        <dbReference type="UniProtKB" id="P02474"/>
    </source>
</evidence>
<evidence type="ECO:0000250" key="4">
    <source>
        <dbReference type="UniProtKB" id="P02489"/>
    </source>
</evidence>
<evidence type="ECO:0000255" key="5">
    <source>
        <dbReference type="PROSITE-ProRule" id="PRU00285"/>
    </source>
</evidence>
<evidence type="ECO:0000256" key="6">
    <source>
        <dbReference type="SAM" id="MobiDB-lite"/>
    </source>
</evidence>
<evidence type="ECO:0000305" key="7"/>
<sequence>MDVTIQHPWFKRALGPFYHNRLFDQFFGEGLFEYDLLPFQSLFRTVLDSGISEVRSDRDQFLILLDHFSPEDLTVKVLDDFVEIHGKHNERQDDHGYISREFHRRYRLPSNVDKSALSCSLSADGMLTFCGPKVQSGMDASHSERAIPVSREEKASSAPNS</sequence>
<reference key="1">
    <citation type="journal article" date="1981" name="Nature">
        <title>Relationship of aardvark to elephants, hyraxes and sea cows from alpha-crystallin sequences.</title>
        <authorList>
            <person name="de Jong W.W."/>
            <person name="Zweers A."/>
            <person name="Goodman M."/>
        </authorList>
    </citation>
    <scope>PARTIAL PROTEIN SEQUENCE</scope>
</reference>
<protein>
    <recommendedName>
        <fullName>Alpha-crystallin A chain</fullName>
    </recommendedName>
</protein>
<comment type="function">
    <text evidence="4">Contributes to the transparency and refractive index of the lens. In its oxidized form (absence of intramolecular disulfide bond), acts as a chaperone, preventing aggregation of various proteins under a wide range of stress conditions. Required for the correct formation of lens intermediate filaments as part of a complex composed of BFSP1, BFSP2 and CRYAA.</text>
</comment>
<comment type="subunit">
    <text evidence="2 4">Heteromer composed of three CRYAA and one CRYAB subunits. Inter-subunit bridging via zinc ions enhances stability, which is crucial as there is no protein turn over in the lens. Can also form homodimers and homotetramers (dimers of dimers) which serve as the building blocks of homooligomers (By similarity). Within homooligomers, the zinc-binding motif is created from residues of 3 different molecules. His-88 and Glu-90 from one molecule are ligands of the zinc ion, and His-95 and His-142 residues from additional molecules complete the site with tetrahedral coordination geometry (By similarity). Part of a complex required for lens intermediate filament formation composed of BFSP1, BFSP2 and CRYAA (By similarity).</text>
</comment>
<comment type="subcellular location">
    <subcellularLocation>
        <location evidence="4">Cytoplasm</location>
    </subcellularLocation>
    <subcellularLocation>
        <location evidence="4">Nucleus</location>
    </subcellularLocation>
    <text evidence="4">Translocates to the nucleus during heat shock and resides in sub-nuclear structures known as SC35 speckles or nuclear splicing speckles.</text>
</comment>
<comment type="PTM">
    <text evidence="4">Undergoes age-dependent proteolytical cleavage at the C-terminus.</text>
</comment>
<comment type="similarity">
    <text evidence="5">Belongs to the small heat shock protein (HSP20) family.</text>
</comment>
<organism>
    <name type="scientific">Trichechus inunguis</name>
    <name type="common">Amazon manatee</name>
    <name type="synonym">Brazilian manatee</name>
    <dbReference type="NCBI Taxonomy" id="9777"/>
    <lineage>
        <taxon>Eukaryota</taxon>
        <taxon>Metazoa</taxon>
        <taxon>Chordata</taxon>
        <taxon>Craniata</taxon>
        <taxon>Vertebrata</taxon>
        <taxon>Euteleostomi</taxon>
        <taxon>Mammalia</taxon>
        <taxon>Eutheria</taxon>
        <taxon>Afrotheria</taxon>
        <taxon>Sirenia</taxon>
        <taxon>Trichechidae</taxon>
        <taxon>Trichechus</taxon>
    </lineage>
</organism>
<feature type="chain" id="PRO_0000125888" description="Alpha-crystallin A chain">
    <location>
        <begin position="1"/>
        <end position="161"/>
    </location>
</feature>
<feature type="domain" description="sHSP" evidence="5">
    <location>
        <begin position="41"/>
        <end position="150"/>
    </location>
</feature>
<feature type="region of interest" description="Required for complex formation with BFSP1 and BFSP2" evidence="4">
    <location>
        <begin position="1"/>
        <end position="53"/>
    </location>
</feature>
<feature type="region of interest" description="Disordered" evidence="6">
    <location>
        <begin position="135"/>
        <end position="161"/>
    </location>
</feature>
<feature type="compositionally biased region" description="Basic and acidic residues" evidence="6">
    <location>
        <begin position="141"/>
        <end position="155"/>
    </location>
</feature>
<feature type="binding site" evidence="2">
    <location>
        <position position="88"/>
    </location>
    <ligand>
        <name>Zn(2+)</name>
        <dbReference type="ChEBI" id="CHEBI:29105"/>
        <label>1</label>
    </ligand>
</feature>
<feature type="binding site" evidence="2">
    <location>
        <position position="90"/>
    </location>
    <ligand>
        <name>Zn(2+)</name>
        <dbReference type="ChEBI" id="CHEBI:29105"/>
        <label>1</label>
    </ligand>
</feature>
<feature type="binding site" evidence="2">
    <location>
        <position position="95"/>
    </location>
    <ligand>
        <name>Zn(2+)</name>
        <dbReference type="ChEBI" id="CHEBI:29105"/>
        <label>2</label>
    </ligand>
</feature>
<feature type="binding site" evidence="2">
    <location>
        <position position="142"/>
    </location>
    <ligand>
        <name>Zn(2+)</name>
        <dbReference type="ChEBI" id="CHEBI:29105"/>
        <label>3</label>
    </ligand>
</feature>
<feature type="modified residue" description="N-acetylmethionine" evidence="3 7">
    <location>
        <position position="1"/>
    </location>
</feature>
<feature type="modified residue" description="Deamidated glutamine; partial" evidence="1">
    <location>
        <position position="6"/>
    </location>
</feature>
<feature type="modified residue" description="Deamidated glutamine; partial" evidence="1">
    <location>
        <position position="40"/>
    </location>
</feature>
<feature type="modified residue" description="N6-acetyllysine" evidence="4">
    <location>
        <position position="87"/>
    </location>
</feature>
<feature type="modified residue" description="Deamidated asparagine; partial" evidence="1">
    <location>
        <position position="89"/>
    </location>
</feature>
<feature type="modified residue" description="Phosphoserine" evidence="2">
    <location>
        <position position="110"/>
    </location>
</feature>
<feature type="modified residue" description="Deamidated asparagine; partial" evidence="1">
    <location>
        <position position="111"/>
    </location>
</feature>
<feature type="modified residue" description="Deamidated glutamine; partial" evidence="1">
    <location>
        <position position="135"/>
    </location>
</feature>
<feature type="glycosylation site" description="O-linked (GlcNAc) serine" evidence="1">
    <location>
        <position position="150"/>
    </location>
</feature>
<feature type="disulfide bond" evidence="4">
    <location>
        <begin position="119"/>
        <end position="130"/>
    </location>
</feature>
<feature type="non-consecutive residues" evidence="7">
    <location>
        <begin position="39"/>
        <end position="40"/>
    </location>
</feature>
<feature type="non-consecutive residues" evidence="7">
    <location>
        <begin position="66"/>
        <end position="67"/>
    </location>
</feature>
<accession>P02500</accession>